<gene>
    <name type="primary">PRNP</name>
    <name type="synonym">PRP</name>
    <name type="ORF">QflA-10237</name>
</gene>
<comment type="function">
    <text evidence="2 4">Its primary physiological function is unclear. Has cytoprotective activity against internal or environmental stresses. May play a role in neuronal development and synaptic plasticity. May be required for neuronal myelin sheath maintenance. May play a role in iron uptake and iron homeostasis. Soluble oligomers are toxic to cultured neuroblastoma cells and induce apoptosis (in vitro). Association with GPC1 (via its heparan sulfate chains) targets PRNP to lipid rafts. Also provides Cu(2+) or Zn(2+) for the ascorbate-mediated GPC1 deaminase degradation of its heparan sulfate side chains (By similarity).</text>
</comment>
<comment type="subunit">
    <text evidence="2 4">Monomer and homodimer. Has a tendency to aggregate into amyloid fibrils containing a cross-beta spine, formed by a steric zipper of superposed beta-strands. Soluble oligomers may represent an intermediate stage on the path to fibril formation. Copper binding may promote oligomerization. Interacts with GRB2, APP, ERI3/PRNPIP and SYN1. Mislocalized cytosolically exposed PrP interacts with MGRN1; this interaction alters MGRN1 subcellular location and causes lysosomal enlargement. Interacts with KIAA1191.</text>
</comment>
<comment type="subcellular location">
    <subcellularLocation>
        <location evidence="2">Cell membrane</location>
        <topology evidence="2">Lipid-anchor</topology>
        <topology evidence="2">GPI-anchor</topology>
    </subcellularLocation>
    <subcellularLocation>
        <location evidence="4">Golgi apparatus</location>
    </subcellularLocation>
    <text evidence="2">Targeted to lipid rafts via association with the heparan sulfate chains of GPC1. Colocates, in the presence of Cu(2+), to vesicles in para- and perinuclear regions, where both proteins undergo internalization. Heparin displaces PRNP from lipid rafts and promotes endocytosis.</text>
</comment>
<comment type="domain">
    <text evidence="2">The normal, monomeric form has a mainly alpha-helical structure. The disease-associated, protease-resistant form forms amyloid fibrils containing a cross-beta spine, formed by a steric zipper of superposed beta-strands. Disease mutations may favor intermolecular contacts via short beta strands, and may thereby trigger oligomerization.</text>
</comment>
<comment type="domain">
    <text evidence="2">Contains an N-terminal region composed of octamer repeats. At low copper concentrations, the sidechains of His residues from three or four repeats contribute to the binding of a single copper ion. Alternatively, a copper ion can be bound by interaction with the sidechain and backbone amide nitrogen of a single His residue. The observed copper binding stoichiometry suggests that two repeat regions cooperate to stabilize the binding of a single copper ion. At higher copper concentrations, each octamer can bind one copper ion by interactions with the His sidechain and Gly backbone atoms. A mixture of binding types may occur, especially in the case of octamer repeat expansion. Copper binding may stabilize the conformation of this region and may promote oligomerization.</text>
</comment>
<comment type="disease">
    <text evidence="7">PrP is found in high quantity in the brain of humans and animals infected with the degenerative neurological diseases kuru, Creutzfeldt-Jakob disease (CJD), Gerstmann-Straussler syndrome (GSS), scrapie, bovine spongiform encephalopathy (BSE), transmissible mink encephalopathy (TME), etc.</text>
</comment>
<comment type="similarity">
    <text evidence="7">Belongs to the prion family.</text>
</comment>
<organism>
    <name type="scientific">Macaca fascicularis</name>
    <name type="common">Crab-eating macaque</name>
    <name type="synonym">Cynomolgus monkey</name>
    <dbReference type="NCBI Taxonomy" id="9541"/>
    <lineage>
        <taxon>Eukaryota</taxon>
        <taxon>Metazoa</taxon>
        <taxon>Chordata</taxon>
        <taxon>Craniata</taxon>
        <taxon>Vertebrata</taxon>
        <taxon>Euteleostomi</taxon>
        <taxon>Mammalia</taxon>
        <taxon>Eutheria</taxon>
        <taxon>Euarchontoglires</taxon>
        <taxon>Primates</taxon>
        <taxon>Haplorrhini</taxon>
        <taxon>Catarrhini</taxon>
        <taxon>Cercopithecidae</taxon>
        <taxon>Cercopithecinae</taxon>
        <taxon>Macaca</taxon>
    </lineage>
</organism>
<sequence>MANLGCWMLVLFVATWSDLGLCKKRPKPGGWNTGGSRYPGQGSPGGNRYPPQGGGGWGQPHGGGWGQPHGGGWGQPHGGGWGQPHGGGWGQGGGTHNQWHKPSKPKTSMKHMAGAAAAGAVVGGLGGYMLGSAMSRPLIHFGNDYEDRYYRENMYRYPNQVYYRPVDQYSNQNNFVHDCVNITIKQHTVTTTTKGENFTETDVKMMERVVEQMCITQYEKESQAYYQRGSSMVLFSSPPVILLISFLIFLIVG</sequence>
<reference key="1">
    <citation type="journal article" date="1995" name="J. Mol. Biol.">
        <title>Prion protein gene variation among primates.</title>
        <authorList>
            <person name="Schaetzl H.M."/>
            <person name="Da Costa M."/>
            <person name="Taylor L."/>
            <person name="Cohen F.E."/>
            <person name="Prusiner S.B."/>
        </authorList>
    </citation>
    <scope>NUCLEOTIDE SEQUENCE [GENOMIC DNA]</scope>
</reference>
<reference key="2">
    <citation type="journal article" date="1997" name="J. Mol. Biol.">
        <authorList>
            <person name="Schaetzl H.M."/>
            <person name="Da Costa M."/>
            <person name="Taylor L."/>
            <person name="Cohen F.E."/>
            <person name="Prusiner S.B."/>
        </authorList>
    </citation>
    <scope>ERRATUM OF PUBMED:7837269</scope>
</reference>
<reference key="3">
    <citation type="submission" date="2003-10" db="EMBL/GenBank/DDBJ databases">
        <title>Isolation and characterization of cDNA for macaque neurological disease genes.</title>
        <authorList>
            <person name="Kusuda J."/>
            <person name="Osada N."/>
            <person name="Tanuma R."/>
            <person name="Hirata M."/>
            <person name="Sugano S."/>
            <person name="Hashimoto K."/>
        </authorList>
    </citation>
    <scope>NUCLEOTIDE SEQUENCE [LARGE SCALE MRNA]</scope>
    <source>
        <tissue>Frontal cortex</tissue>
    </source>
</reference>
<feature type="signal peptide" evidence="1">
    <location>
        <begin position="1"/>
        <end position="22"/>
    </location>
</feature>
<feature type="chain" id="PRO_0000025683" description="Major prion protein">
    <location>
        <begin position="23"/>
        <end position="230"/>
    </location>
</feature>
<feature type="propeptide" id="PRO_0000025684" description="Removed in mature form" evidence="1">
    <location>
        <begin position="231"/>
        <end position="253"/>
    </location>
</feature>
<feature type="repeat" description="1">
    <location>
        <begin position="51"/>
        <end position="59"/>
    </location>
</feature>
<feature type="repeat" description="2">
    <location>
        <begin position="60"/>
        <end position="67"/>
    </location>
</feature>
<feature type="repeat" description="3">
    <location>
        <begin position="68"/>
        <end position="75"/>
    </location>
</feature>
<feature type="repeat" description="4">
    <location>
        <begin position="76"/>
        <end position="83"/>
    </location>
</feature>
<feature type="repeat" description="5">
    <location>
        <begin position="84"/>
        <end position="91"/>
    </location>
</feature>
<feature type="region of interest" description="Interaction with GRB2, ERI3 and SYN1" evidence="4">
    <location>
        <begin position="23"/>
        <end position="230"/>
    </location>
</feature>
<feature type="region of interest" description="Disordered" evidence="6">
    <location>
        <begin position="26"/>
        <end position="108"/>
    </location>
</feature>
<feature type="region of interest" description="5 X 8 AA tandem repeats of P-H-G-G-G-W-G-Q">
    <location>
        <begin position="51"/>
        <end position="91"/>
    </location>
</feature>
<feature type="compositionally biased region" description="Gly residues" evidence="6">
    <location>
        <begin position="52"/>
        <end position="95"/>
    </location>
</feature>
<feature type="compositionally biased region" description="Basic residues" evidence="6">
    <location>
        <begin position="98"/>
        <end position="108"/>
    </location>
</feature>
<feature type="binding site" evidence="2">
    <location>
        <position position="61"/>
    </location>
    <ligand>
        <name>Cu(2+)</name>
        <dbReference type="ChEBI" id="CHEBI:29036"/>
        <label>1</label>
    </ligand>
</feature>
<feature type="binding site" evidence="2">
    <location>
        <position position="62"/>
    </location>
    <ligand>
        <name>Cu(2+)</name>
        <dbReference type="ChEBI" id="CHEBI:29036"/>
        <label>1</label>
    </ligand>
</feature>
<feature type="binding site" evidence="2">
    <location>
        <position position="63"/>
    </location>
    <ligand>
        <name>Cu(2+)</name>
        <dbReference type="ChEBI" id="CHEBI:29036"/>
        <label>1</label>
    </ligand>
</feature>
<feature type="binding site" evidence="2">
    <location>
        <position position="69"/>
    </location>
    <ligand>
        <name>Cu(2+)</name>
        <dbReference type="ChEBI" id="CHEBI:29036"/>
        <label>2</label>
    </ligand>
</feature>
<feature type="binding site" evidence="2">
    <location>
        <position position="70"/>
    </location>
    <ligand>
        <name>Cu(2+)</name>
        <dbReference type="ChEBI" id="CHEBI:29036"/>
        <label>2</label>
    </ligand>
</feature>
<feature type="binding site" evidence="2">
    <location>
        <position position="71"/>
    </location>
    <ligand>
        <name>Cu(2+)</name>
        <dbReference type="ChEBI" id="CHEBI:29036"/>
        <label>2</label>
    </ligand>
</feature>
<feature type="binding site" evidence="2">
    <location>
        <position position="77"/>
    </location>
    <ligand>
        <name>Cu(2+)</name>
        <dbReference type="ChEBI" id="CHEBI:29036"/>
        <label>3</label>
    </ligand>
</feature>
<feature type="binding site" evidence="2">
    <location>
        <position position="78"/>
    </location>
    <ligand>
        <name>Cu(2+)</name>
        <dbReference type="ChEBI" id="CHEBI:29036"/>
        <label>3</label>
    </ligand>
</feature>
<feature type="binding site" evidence="2">
    <location>
        <position position="79"/>
    </location>
    <ligand>
        <name>Cu(2+)</name>
        <dbReference type="ChEBI" id="CHEBI:29036"/>
        <label>3</label>
    </ligand>
</feature>
<feature type="binding site" evidence="2">
    <location>
        <position position="85"/>
    </location>
    <ligand>
        <name>Cu(2+)</name>
        <dbReference type="ChEBI" id="CHEBI:29036"/>
        <label>4</label>
    </ligand>
</feature>
<feature type="binding site" evidence="2">
    <location>
        <position position="86"/>
    </location>
    <ligand>
        <name>Cu(2+)</name>
        <dbReference type="ChEBI" id="CHEBI:29036"/>
        <label>4</label>
    </ligand>
</feature>
<feature type="binding site" evidence="2">
    <location>
        <position position="87"/>
    </location>
    <ligand>
        <name>Cu(2+)</name>
        <dbReference type="ChEBI" id="CHEBI:29036"/>
        <label>4</label>
    </ligand>
</feature>
<feature type="lipid moiety-binding region" description="GPI-anchor amidated serine" evidence="3">
    <location>
        <position position="230"/>
    </location>
</feature>
<feature type="glycosylation site" description="N-linked (GlcNAc...) asparagine" evidence="5">
    <location>
        <position position="181"/>
    </location>
</feature>
<feature type="glycosylation site" description="N-linked (GlcNAc...) asparagine" evidence="5">
    <location>
        <position position="197"/>
    </location>
</feature>
<feature type="disulfide bond" evidence="3">
    <location>
        <begin position="179"/>
        <end position="214"/>
    </location>
</feature>
<protein>
    <recommendedName>
        <fullName>Major prion protein</fullName>
        <shortName>PrP</shortName>
    </recommendedName>
    <alternativeName>
        <fullName>PrP27-30</fullName>
    </alternativeName>
    <alternativeName>
        <fullName>PrP33-35C</fullName>
    </alternativeName>
    <cdAntigenName>CD230</cdAntigenName>
</protein>
<proteinExistence type="evidence at transcript level"/>
<evidence type="ECO:0000250" key="1"/>
<evidence type="ECO:0000250" key="2">
    <source>
        <dbReference type="UniProtKB" id="P04156"/>
    </source>
</evidence>
<evidence type="ECO:0000250" key="3">
    <source>
        <dbReference type="UniProtKB" id="P04273"/>
    </source>
</evidence>
<evidence type="ECO:0000250" key="4">
    <source>
        <dbReference type="UniProtKB" id="P04925"/>
    </source>
</evidence>
<evidence type="ECO:0000255" key="5"/>
<evidence type="ECO:0000256" key="6">
    <source>
        <dbReference type="SAM" id="MobiDB-lite"/>
    </source>
</evidence>
<evidence type="ECO:0000305" key="7"/>
<keyword id="KW-0034">Amyloid</keyword>
<keyword id="KW-1003">Cell membrane</keyword>
<keyword id="KW-0186">Copper</keyword>
<keyword id="KW-1015">Disulfide bond</keyword>
<keyword id="KW-0325">Glycoprotein</keyword>
<keyword id="KW-0333">Golgi apparatus</keyword>
<keyword id="KW-0336">GPI-anchor</keyword>
<keyword id="KW-0449">Lipoprotein</keyword>
<keyword id="KW-0472">Membrane</keyword>
<keyword id="KW-0479">Metal-binding</keyword>
<keyword id="KW-0640">Prion</keyword>
<keyword id="KW-1185">Reference proteome</keyword>
<keyword id="KW-0677">Repeat</keyword>
<keyword id="KW-0732">Signal</keyword>
<keyword id="KW-0862">Zinc</keyword>
<name>PRIO_MACFA</name>
<dbReference type="EMBL" id="U08298">
    <property type="protein sequence ID" value="AAC50087.1"/>
    <property type="molecule type" value="Genomic_DNA"/>
</dbReference>
<dbReference type="EMBL" id="AB125193">
    <property type="protein sequence ID" value="BAD51981.1"/>
    <property type="molecule type" value="mRNA"/>
</dbReference>
<dbReference type="PIR" id="S53623">
    <property type="entry name" value="S53623"/>
</dbReference>
<dbReference type="RefSeq" id="NP_001274558.1">
    <property type="nucleotide sequence ID" value="NM_001287629.1"/>
</dbReference>
<dbReference type="RefSeq" id="XP_005568470.1">
    <property type="nucleotide sequence ID" value="XM_005568413.4"/>
</dbReference>
<dbReference type="RefSeq" id="XP_045218487.1">
    <property type="nucleotide sequence ID" value="XM_045362552.2"/>
</dbReference>
<dbReference type="RefSeq" id="XP_065378874.1">
    <property type="nucleotide sequence ID" value="XM_065522802.1"/>
</dbReference>
<dbReference type="SMR" id="P67992"/>
<dbReference type="STRING" id="9541.ENSMFAP00000009807"/>
<dbReference type="GlyCosmos" id="P67992">
    <property type="glycosylation" value="2 sites, No reported glycans"/>
</dbReference>
<dbReference type="Ensembl" id="ENSMFAT00000036752.2">
    <property type="protein sequence ID" value="ENSMFAP00000009807.1"/>
    <property type="gene ID" value="ENSMFAG00000033814.2"/>
</dbReference>
<dbReference type="Ensembl" id="ENSMFAT00000097198.1">
    <property type="protein sequence ID" value="ENSMFAP00000050267.1"/>
    <property type="gene ID" value="ENSMFAG00000033814.2"/>
</dbReference>
<dbReference type="GeneID" id="102127229"/>
<dbReference type="CTD" id="5621"/>
<dbReference type="VEuPathDB" id="HostDB:ENSMFAG00000033814"/>
<dbReference type="eggNOG" id="ENOG502S2A8">
    <property type="taxonomic scope" value="Eukaryota"/>
</dbReference>
<dbReference type="GeneTree" id="ENSGT00510000049083"/>
<dbReference type="OMA" id="QMCTTQY"/>
<dbReference type="Proteomes" id="UP000233100">
    <property type="component" value="Chromosome 10"/>
</dbReference>
<dbReference type="Bgee" id="ENSMFAG00000033814">
    <property type="expression patterns" value="Expressed in temporal lobe and 13 other cell types or tissues"/>
</dbReference>
<dbReference type="GO" id="GO:0009986">
    <property type="term" value="C:cell surface"/>
    <property type="evidence" value="ECO:0007669"/>
    <property type="project" value="Ensembl"/>
</dbReference>
<dbReference type="GO" id="GO:0005829">
    <property type="term" value="C:cytosol"/>
    <property type="evidence" value="ECO:0007669"/>
    <property type="project" value="Ensembl"/>
</dbReference>
<dbReference type="GO" id="GO:0030425">
    <property type="term" value="C:dendrite"/>
    <property type="evidence" value="ECO:0007669"/>
    <property type="project" value="Ensembl"/>
</dbReference>
<dbReference type="GO" id="GO:0005783">
    <property type="term" value="C:endoplasmic reticulum"/>
    <property type="evidence" value="ECO:0007669"/>
    <property type="project" value="Ensembl"/>
</dbReference>
<dbReference type="GO" id="GO:0005794">
    <property type="term" value="C:Golgi apparatus"/>
    <property type="evidence" value="ECO:0007669"/>
    <property type="project" value="UniProtKB-SubCell"/>
</dbReference>
<dbReference type="GO" id="GO:0016234">
    <property type="term" value="C:inclusion body"/>
    <property type="evidence" value="ECO:0007669"/>
    <property type="project" value="Ensembl"/>
</dbReference>
<dbReference type="GO" id="GO:0045121">
    <property type="term" value="C:membrane raft"/>
    <property type="evidence" value="ECO:0007669"/>
    <property type="project" value="Ensembl"/>
</dbReference>
<dbReference type="GO" id="GO:0031965">
    <property type="term" value="C:nuclear membrane"/>
    <property type="evidence" value="ECO:0007669"/>
    <property type="project" value="Ensembl"/>
</dbReference>
<dbReference type="GO" id="GO:0005886">
    <property type="term" value="C:plasma membrane"/>
    <property type="evidence" value="ECO:0007669"/>
    <property type="project" value="UniProtKB-SubCell"/>
</dbReference>
<dbReference type="GO" id="GO:0098552">
    <property type="term" value="C:side of membrane"/>
    <property type="evidence" value="ECO:0007669"/>
    <property type="project" value="UniProtKB-KW"/>
</dbReference>
<dbReference type="GO" id="GO:0043195">
    <property type="term" value="C:terminal bouton"/>
    <property type="evidence" value="ECO:0007669"/>
    <property type="project" value="Ensembl"/>
</dbReference>
<dbReference type="GO" id="GO:0001540">
    <property type="term" value="F:amyloid-beta binding"/>
    <property type="evidence" value="ECO:0007669"/>
    <property type="project" value="Ensembl"/>
</dbReference>
<dbReference type="GO" id="GO:0019828">
    <property type="term" value="F:aspartic-type endopeptidase inhibitor activity"/>
    <property type="evidence" value="ECO:0007669"/>
    <property type="project" value="Ensembl"/>
</dbReference>
<dbReference type="GO" id="GO:0005507">
    <property type="term" value="F:copper ion binding"/>
    <property type="evidence" value="ECO:0000250"/>
    <property type="project" value="UniProtKB"/>
</dbReference>
<dbReference type="GO" id="GO:1903135">
    <property type="term" value="F:cupric ion binding"/>
    <property type="evidence" value="ECO:0007669"/>
    <property type="project" value="Ensembl"/>
</dbReference>
<dbReference type="GO" id="GO:1903136">
    <property type="term" value="F:cuprous ion binding"/>
    <property type="evidence" value="ECO:0007669"/>
    <property type="project" value="Ensembl"/>
</dbReference>
<dbReference type="GO" id="GO:0005539">
    <property type="term" value="F:glycosaminoglycan binding"/>
    <property type="evidence" value="ECO:0007669"/>
    <property type="project" value="Ensembl"/>
</dbReference>
<dbReference type="GO" id="GO:0042802">
    <property type="term" value="F:identical protein binding"/>
    <property type="evidence" value="ECO:0007669"/>
    <property type="project" value="Ensembl"/>
</dbReference>
<dbReference type="GO" id="GO:0008017">
    <property type="term" value="F:microtubule binding"/>
    <property type="evidence" value="ECO:0007669"/>
    <property type="project" value="Ensembl"/>
</dbReference>
<dbReference type="GO" id="GO:0140693">
    <property type="term" value="F:molecular condensate scaffold activity"/>
    <property type="evidence" value="ECO:0007669"/>
    <property type="project" value="Ensembl"/>
</dbReference>
<dbReference type="GO" id="GO:0140677">
    <property type="term" value="F:molecular function activator activity"/>
    <property type="evidence" value="ECO:0007669"/>
    <property type="project" value="Ensembl"/>
</dbReference>
<dbReference type="GO" id="GO:0002020">
    <property type="term" value="F:protease binding"/>
    <property type="evidence" value="ECO:0007669"/>
    <property type="project" value="Ensembl"/>
</dbReference>
<dbReference type="GO" id="GO:0044877">
    <property type="term" value="F:protein-containing complex binding"/>
    <property type="evidence" value="ECO:0007669"/>
    <property type="project" value="Ensembl"/>
</dbReference>
<dbReference type="GO" id="GO:0038023">
    <property type="term" value="F:signaling receptor activity"/>
    <property type="evidence" value="ECO:0007669"/>
    <property type="project" value="Ensembl"/>
</dbReference>
<dbReference type="GO" id="GO:0031802">
    <property type="term" value="F:type 5 metabotropic glutamate receptor binding"/>
    <property type="evidence" value="ECO:0007669"/>
    <property type="project" value="Ensembl"/>
</dbReference>
<dbReference type="GO" id="GO:1904646">
    <property type="term" value="P:cellular response to amyloid-beta"/>
    <property type="evidence" value="ECO:0007669"/>
    <property type="project" value="Ensembl"/>
</dbReference>
<dbReference type="GO" id="GO:0071280">
    <property type="term" value="P:cellular response to copper ion"/>
    <property type="evidence" value="ECO:0007669"/>
    <property type="project" value="Ensembl"/>
</dbReference>
<dbReference type="GO" id="GO:0071466">
    <property type="term" value="P:cellular response to xenobiotic stimulus"/>
    <property type="evidence" value="ECO:0007669"/>
    <property type="project" value="Ensembl"/>
</dbReference>
<dbReference type="GO" id="GO:0035556">
    <property type="term" value="P:intracellular signal transduction"/>
    <property type="evidence" value="ECO:0007669"/>
    <property type="project" value="Ensembl"/>
</dbReference>
<dbReference type="GO" id="GO:0007611">
    <property type="term" value="P:learning or memory"/>
    <property type="evidence" value="ECO:0007669"/>
    <property type="project" value="Ensembl"/>
</dbReference>
<dbReference type="GO" id="GO:0046007">
    <property type="term" value="P:negative regulation of activated T cell proliferation"/>
    <property type="evidence" value="ECO:0007669"/>
    <property type="project" value="Ensembl"/>
</dbReference>
<dbReference type="GO" id="GO:1902430">
    <property type="term" value="P:negative regulation of amyloid-beta formation"/>
    <property type="evidence" value="ECO:0007669"/>
    <property type="project" value="Ensembl"/>
</dbReference>
<dbReference type="GO" id="GO:0043066">
    <property type="term" value="P:negative regulation of apoptotic process"/>
    <property type="evidence" value="ECO:0007669"/>
    <property type="project" value="Ensembl"/>
</dbReference>
<dbReference type="GO" id="GO:0070885">
    <property type="term" value="P:negative regulation of calcineurin-NFAT signaling cascade"/>
    <property type="evidence" value="ECO:0007669"/>
    <property type="project" value="Ensembl"/>
</dbReference>
<dbReference type="GO" id="GO:1902951">
    <property type="term" value="P:negative regulation of dendritic spine maintenance"/>
    <property type="evidence" value="ECO:0007669"/>
    <property type="project" value="Ensembl"/>
</dbReference>
<dbReference type="GO" id="GO:0032700">
    <property type="term" value="P:negative regulation of interleukin-17 production"/>
    <property type="evidence" value="ECO:0007669"/>
    <property type="project" value="Ensembl"/>
</dbReference>
<dbReference type="GO" id="GO:0032703">
    <property type="term" value="P:negative regulation of interleukin-2 production"/>
    <property type="evidence" value="ECO:0007669"/>
    <property type="project" value="Ensembl"/>
</dbReference>
<dbReference type="GO" id="GO:0050860">
    <property type="term" value="P:negative regulation of T cell receptor signaling pathway"/>
    <property type="evidence" value="ECO:0007669"/>
    <property type="project" value="Ensembl"/>
</dbReference>
<dbReference type="GO" id="GO:0000122">
    <property type="term" value="P:negative regulation of transcription by RNA polymerase II"/>
    <property type="evidence" value="ECO:0007669"/>
    <property type="project" value="Ensembl"/>
</dbReference>
<dbReference type="GO" id="GO:0032689">
    <property type="term" value="P:negative regulation of type II interferon production"/>
    <property type="evidence" value="ECO:0007669"/>
    <property type="project" value="Ensembl"/>
</dbReference>
<dbReference type="GO" id="GO:1990535">
    <property type="term" value="P:neuron projection maintenance"/>
    <property type="evidence" value="ECO:0007669"/>
    <property type="project" value="Ensembl"/>
</dbReference>
<dbReference type="GO" id="GO:0050850">
    <property type="term" value="P:positive regulation of calcium-mediated signaling"/>
    <property type="evidence" value="ECO:0007669"/>
    <property type="project" value="Ensembl"/>
</dbReference>
<dbReference type="GO" id="GO:1900451">
    <property type="term" value="P:positive regulation of glutamate receptor signaling pathway"/>
    <property type="evidence" value="ECO:0007669"/>
    <property type="project" value="Ensembl"/>
</dbReference>
<dbReference type="GO" id="GO:0043525">
    <property type="term" value="P:positive regulation of neuron apoptotic process"/>
    <property type="evidence" value="ECO:0007669"/>
    <property type="project" value="Ensembl"/>
</dbReference>
<dbReference type="GO" id="GO:1903078">
    <property type="term" value="P:positive regulation of protein localization to plasma membrane"/>
    <property type="evidence" value="ECO:0007669"/>
    <property type="project" value="Ensembl"/>
</dbReference>
<dbReference type="GO" id="GO:0090314">
    <property type="term" value="P:positive regulation of protein targeting to membrane"/>
    <property type="evidence" value="ECO:0007669"/>
    <property type="project" value="Ensembl"/>
</dbReference>
<dbReference type="GO" id="GO:0031648">
    <property type="term" value="P:protein destabilization"/>
    <property type="evidence" value="ECO:0007669"/>
    <property type="project" value="Ensembl"/>
</dbReference>
<dbReference type="GO" id="GO:0051260">
    <property type="term" value="P:protein homooligomerization"/>
    <property type="evidence" value="ECO:0007669"/>
    <property type="project" value="InterPro"/>
</dbReference>
<dbReference type="GO" id="GO:1905664">
    <property type="term" value="P:regulation of calcium ion import across plasma membrane"/>
    <property type="evidence" value="ECO:0007669"/>
    <property type="project" value="Ensembl"/>
</dbReference>
<dbReference type="GO" id="GO:1901379">
    <property type="term" value="P:regulation of potassium ion transmembrane transport"/>
    <property type="evidence" value="ECO:0007669"/>
    <property type="project" value="Ensembl"/>
</dbReference>
<dbReference type="GO" id="GO:0006979">
    <property type="term" value="P:response to oxidative stress"/>
    <property type="evidence" value="ECO:0007669"/>
    <property type="project" value="Ensembl"/>
</dbReference>
<dbReference type="FunFam" id="1.10.790.10:FF:000001">
    <property type="entry name" value="Major prion protein"/>
    <property type="match status" value="1"/>
</dbReference>
<dbReference type="Gene3D" id="1.10.790.10">
    <property type="entry name" value="Prion/Doppel protein, beta-ribbon domain"/>
    <property type="match status" value="1"/>
</dbReference>
<dbReference type="InterPro" id="IPR000817">
    <property type="entry name" value="Prion"/>
</dbReference>
<dbReference type="InterPro" id="IPR036924">
    <property type="entry name" value="Prion/Doppel_b-ribbon_dom_sf"/>
</dbReference>
<dbReference type="InterPro" id="IPR022416">
    <property type="entry name" value="Prion/Doppel_prot_b-ribbon_dom"/>
</dbReference>
<dbReference type="InterPro" id="IPR020949">
    <property type="entry name" value="Prion_copper_b_octapeptide"/>
</dbReference>
<dbReference type="InterPro" id="IPR025860">
    <property type="entry name" value="Prion_N"/>
</dbReference>
<dbReference type="PANTHER" id="PTHR15506">
    <property type="entry name" value="DOPPEL PRION"/>
    <property type="match status" value="1"/>
</dbReference>
<dbReference type="PANTHER" id="PTHR15506:SF2">
    <property type="entry name" value="MAJOR PRION PROTEIN"/>
    <property type="match status" value="1"/>
</dbReference>
<dbReference type="Pfam" id="PF00377">
    <property type="entry name" value="Prion"/>
    <property type="match status" value="1"/>
</dbReference>
<dbReference type="Pfam" id="PF11587">
    <property type="entry name" value="Prion_bPrPp"/>
    <property type="match status" value="1"/>
</dbReference>
<dbReference type="Pfam" id="PF03991">
    <property type="entry name" value="Prion_octapep"/>
    <property type="match status" value="1"/>
</dbReference>
<dbReference type="PRINTS" id="PR00341">
    <property type="entry name" value="PRION"/>
</dbReference>
<dbReference type="SMART" id="SM00157">
    <property type="entry name" value="PRP"/>
    <property type="match status" value="1"/>
</dbReference>
<dbReference type="SUPFAM" id="SSF54098">
    <property type="entry name" value="Prion-like"/>
    <property type="match status" value="1"/>
</dbReference>
<dbReference type="PROSITE" id="PS00291">
    <property type="entry name" value="PRION_1"/>
    <property type="match status" value="1"/>
</dbReference>
<dbReference type="PROSITE" id="PS00706">
    <property type="entry name" value="PRION_2"/>
    <property type="match status" value="1"/>
</dbReference>
<accession>P67992</accession>
<accession>P40254</accession>
<accession>Q60HD4</accession>